<comment type="function">
    <text evidence="1">The RuvA-RuvB-RuvC complex processes Holliday junction (HJ) DNA during genetic recombination and DNA repair. Endonuclease that resolves HJ intermediates. Cleaves cruciform DNA by making single-stranded nicks across the HJ at symmetrical positions within the homologous arms, yielding a 5'-phosphate and a 3'-hydroxyl group; requires a central core of homology in the junction. The consensus cleavage sequence is 5'-(A/T)TT(C/G)-3'. Cleavage occurs on the 3'-side of the TT dinucleotide at the point of strand exchange. HJ branch migration catalyzed by RuvA-RuvB allows RuvC to scan DNA until it finds its consensus sequence, where it cleaves and resolves the cruciform DNA.</text>
</comment>
<comment type="catalytic activity">
    <reaction evidence="1">
        <text>Endonucleolytic cleavage at a junction such as a reciprocal single-stranded crossover between two homologous DNA duplexes (Holliday junction).</text>
        <dbReference type="EC" id="3.1.21.10"/>
    </reaction>
</comment>
<comment type="cofactor">
    <cofactor evidence="1">
        <name>Mg(2+)</name>
        <dbReference type="ChEBI" id="CHEBI:18420"/>
    </cofactor>
    <text evidence="1">Binds 2 Mg(2+) ion per subunit.</text>
</comment>
<comment type="subunit">
    <text evidence="1">Homodimer which binds Holliday junction (HJ) DNA. The HJ becomes 2-fold symmetrical on binding to RuvC with unstacked arms; it has a different conformation from HJ DNA in complex with RuvA. In the full resolvosome a probable DNA-RuvA(4)-RuvB(12)-RuvC(2) complex forms which resolves the HJ.</text>
</comment>
<comment type="subcellular location">
    <subcellularLocation>
        <location evidence="1">Cytoplasm</location>
    </subcellularLocation>
</comment>
<comment type="similarity">
    <text evidence="1">Belongs to the RuvC family.</text>
</comment>
<gene>
    <name evidence="1" type="primary">ruvC</name>
    <name type="ordered locus">Aave_0833</name>
</gene>
<proteinExistence type="inferred from homology"/>
<sequence>MRILGIDPGLQTTGFGVVDVDGHHLSYVASGTIRTTGAALGDLPGRLKILFDGITEVAARYQPDVATVEIVFVNVNPQSTLLLGQARGACVTALVASRLPVAEYTALQMKKAVVGHGRAAKSQVQEMVRRLLQLPGLPGTDAADALGLAITHAHAGAAMARLGEATSLNRRQHAMYRSGRAL</sequence>
<name>RUVC_PARC0</name>
<reference key="1">
    <citation type="submission" date="2006-12" db="EMBL/GenBank/DDBJ databases">
        <title>Complete sequence of Acidovorax avenae subsp. citrulli AAC00-1.</title>
        <authorList>
            <person name="Copeland A."/>
            <person name="Lucas S."/>
            <person name="Lapidus A."/>
            <person name="Barry K."/>
            <person name="Detter J.C."/>
            <person name="Glavina del Rio T."/>
            <person name="Dalin E."/>
            <person name="Tice H."/>
            <person name="Pitluck S."/>
            <person name="Kiss H."/>
            <person name="Brettin T."/>
            <person name="Bruce D."/>
            <person name="Han C."/>
            <person name="Tapia R."/>
            <person name="Gilna P."/>
            <person name="Schmutz J."/>
            <person name="Larimer F."/>
            <person name="Land M."/>
            <person name="Hauser L."/>
            <person name="Kyrpides N."/>
            <person name="Kim E."/>
            <person name="Stahl D."/>
            <person name="Richardson P."/>
        </authorList>
    </citation>
    <scope>NUCLEOTIDE SEQUENCE [LARGE SCALE GENOMIC DNA]</scope>
    <source>
        <strain>AAC00-1</strain>
    </source>
</reference>
<keyword id="KW-0963">Cytoplasm</keyword>
<keyword id="KW-0227">DNA damage</keyword>
<keyword id="KW-0233">DNA recombination</keyword>
<keyword id="KW-0234">DNA repair</keyword>
<keyword id="KW-0238">DNA-binding</keyword>
<keyword id="KW-0255">Endonuclease</keyword>
<keyword id="KW-0378">Hydrolase</keyword>
<keyword id="KW-0460">Magnesium</keyword>
<keyword id="KW-0479">Metal-binding</keyword>
<keyword id="KW-0540">Nuclease</keyword>
<evidence type="ECO:0000255" key="1">
    <source>
        <dbReference type="HAMAP-Rule" id="MF_00034"/>
    </source>
</evidence>
<protein>
    <recommendedName>
        <fullName evidence="1">Crossover junction endodeoxyribonuclease RuvC</fullName>
        <ecNumber evidence="1">3.1.21.10</ecNumber>
    </recommendedName>
    <alternativeName>
        <fullName evidence="1">Holliday junction nuclease RuvC</fullName>
    </alternativeName>
    <alternativeName>
        <fullName evidence="1">Holliday junction resolvase RuvC</fullName>
    </alternativeName>
</protein>
<accession>A1TKE3</accession>
<organism>
    <name type="scientific">Paracidovorax citrulli (strain AAC00-1)</name>
    <name type="common">Acidovorax citrulli</name>
    <dbReference type="NCBI Taxonomy" id="397945"/>
    <lineage>
        <taxon>Bacteria</taxon>
        <taxon>Pseudomonadati</taxon>
        <taxon>Pseudomonadota</taxon>
        <taxon>Betaproteobacteria</taxon>
        <taxon>Burkholderiales</taxon>
        <taxon>Comamonadaceae</taxon>
        <taxon>Paracidovorax</taxon>
    </lineage>
</organism>
<dbReference type="EC" id="3.1.21.10" evidence="1"/>
<dbReference type="EMBL" id="CP000512">
    <property type="protein sequence ID" value="ABM31431.1"/>
    <property type="molecule type" value="Genomic_DNA"/>
</dbReference>
<dbReference type="RefSeq" id="WP_011793991.1">
    <property type="nucleotide sequence ID" value="NC_008752.1"/>
</dbReference>
<dbReference type="SMR" id="A1TKE3"/>
<dbReference type="STRING" id="397945.Aave_0833"/>
<dbReference type="GeneID" id="79790489"/>
<dbReference type="KEGG" id="aav:Aave_0833"/>
<dbReference type="eggNOG" id="COG0817">
    <property type="taxonomic scope" value="Bacteria"/>
</dbReference>
<dbReference type="HOGENOM" id="CLU_091257_3_1_4"/>
<dbReference type="OrthoDB" id="9805499at2"/>
<dbReference type="Proteomes" id="UP000002596">
    <property type="component" value="Chromosome"/>
</dbReference>
<dbReference type="GO" id="GO:0005737">
    <property type="term" value="C:cytoplasm"/>
    <property type="evidence" value="ECO:0007669"/>
    <property type="project" value="UniProtKB-SubCell"/>
</dbReference>
<dbReference type="GO" id="GO:0048476">
    <property type="term" value="C:Holliday junction resolvase complex"/>
    <property type="evidence" value="ECO:0007669"/>
    <property type="project" value="UniProtKB-UniRule"/>
</dbReference>
<dbReference type="GO" id="GO:0008821">
    <property type="term" value="F:crossover junction DNA endonuclease activity"/>
    <property type="evidence" value="ECO:0007669"/>
    <property type="project" value="UniProtKB-UniRule"/>
</dbReference>
<dbReference type="GO" id="GO:0003677">
    <property type="term" value="F:DNA binding"/>
    <property type="evidence" value="ECO:0007669"/>
    <property type="project" value="UniProtKB-KW"/>
</dbReference>
<dbReference type="GO" id="GO:0000287">
    <property type="term" value="F:magnesium ion binding"/>
    <property type="evidence" value="ECO:0007669"/>
    <property type="project" value="UniProtKB-UniRule"/>
</dbReference>
<dbReference type="GO" id="GO:0006310">
    <property type="term" value="P:DNA recombination"/>
    <property type="evidence" value="ECO:0007669"/>
    <property type="project" value="UniProtKB-UniRule"/>
</dbReference>
<dbReference type="GO" id="GO:0006281">
    <property type="term" value="P:DNA repair"/>
    <property type="evidence" value="ECO:0007669"/>
    <property type="project" value="UniProtKB-UniRule"/>
</dbReference>
<dbReference type="CDD" id="cd16962">
    <property type="entry name" value="RuvC"/>
    <property type="match status" value="1"/>
</dbReference>
<dbReference type="FunFam" id="3.30.420.10:FF:000002">
    <property type="entry name" value="Crossover junction endodeoxyribonuclease RuvC"/>
    <property type="match status" value="1"/>
</dbReference>
<dbReference type="Gene3D" id="3.30.420.10">
    <property type="entry name" value="Ribonuclease H-like superfamily/Ribonuclease H"/>
    <property type="match status" value="1"/>
</dbReference>
<dbReference type="HAMAP" id="MF_00034">
    <property type="entry name" value="RuvC"/>
    <property type="match status" value="1"/>
</dbReference>
<dbReference type="InterPro" id="IPR012337">
    <property type="entry name" value="RNaseH-like_sf"/>
</dbReference>
<dbReference type="InterPro" id="IPR036397">
    <property type="entry name" value="RNaseH_sf"/>
</dbReference>
<dbReference type="InterPro" id="IPR020563">
    <property type="entry name" value="X-over_junc_endoDNase_Mg_BS"/>
</dbReference>
<dbReference type="InterPro" id="IPR002176">
    <property type="entry name" value="X-over_junc_endoDNase_RuvC"/>
</dbReference>
<dbReference type="NCBIfam" id="TIGR00228">
    <property type="entry name" value="ruvC"/>
    <property type="match status" value="1"/>
</dbReference>
<dbReference type="PANTHER" id="PTHR30194">
    <property type="entry name" value="CROSSOVER JUNCTION ENDODEOXYRIBONUCLEASE RUVC"/>
    <property type="match status" value="1"/>
</dbReference>
<dbReference type="PANTHER" id="PTHR30194:SF3">
    <property type="entry name" value="CROSSOVER JUNCTION ENDODEOXYRIBONUCLEASE RUVC"/>
    <property type="match status" value="1"/>
</dbReference>
<dbReference type="Pfam" id="PF02075">
    <property type="entry name" value="RuvC"/>
    <property type="match status" value="1"/>
</dbReference>
<dbReference type="PRINTS" id="PR00696">
    <property type="entry name" value="RSOLVASERUVC"/>
</dbReference>
<dbReference type="SUPFAM" id="SSF53098">
    <property type="entry name" value="Ribonuclease H-like"/>
    <property type="match status" value="1"/>
</dbReference>
<dbReference type="PROSITE" id="PS01321">
    <property type="entry name" value="RUVC"/>
    <property type="match status" value="1"/>
</dbReference>
<feature type="chain" id="PRO_1000002707" description="Crossover junction endodeoxyribonuclease RuvC">
    <location>
        <begin position="1"/>
        <end position="182"/>
    </location>
</feature>
<feature type="active site" evidence="1">
    <location>
        <position position="7"/>
    </location>
</feature>
<feature type="active site" evidence="1">
    <location>
        <position position="69"/>
    </location>
</feature>
<feature type="active site" evidence="1">
    <location>
        <position position="141"/>
    </location>
</feature>
<feature type="binding site" evidence="1">
    <location>
        <position position="7"/>
    </location>
    <ligand>
        <name>Mg(2+)</name>
        <dbReference type="ChEBI" id="CHEBI:18420"/>
        <label>1</label>
    </ligand>
</feature>
<feature type="binding site" evidence="1">
    <location>
        <position position="69"/>
    </location>
    <ligand>
        <name>Mg(2+)</name>
        <dbReference type="ChEBI" id="CHEBI:18420"/>
        <label>2</label>
    </ligand>
</feature>
<feature type="binding site" evidence="1">
    <location>
        <position position="141"/>
    </location>
    <ligand>
        <name>Mg(2+)</name>
        <dbReference type="ChEBI" id="CHEBI:18420"/>
        <label>1</label>
    </ligand>
</feature>